<organism>
    <name type="scientific">Streptococcus pneumoniae (strain Hungary19A-6)</name>
    <dbReference type="NCBI Taxonomy" id="487214"/>
    <lineage>
        <taxon>Bacteria</taxon>
        <taxon>Bacillati</taxon>
        <taxon>Bacillota</taxon>
        <taxon>Bacilli</taxon>
        <taxon>Lactobacillales</taxon>
        <taxon>Streptococcaceae</taxon>
        <taxon>Streptococcus</taxon>
    </lineage>
</organism>
<dbReference type="EC" id="2.7.1.50" evidence="1"/>
<dbReference type="EMBL" id="CP000936">
    <property type="protein sequence ID" value="ACA36432.1"/>
    <property type="molecule type" value="Genomic_DNA"/>
</dbReference>
<dbReference type="RefSeq" id="WP_001155198.1">
    <property type="nucleotide sequence ID" value="NC_010380.1"/>
</dbReference>
<dbReference type="SMR" id="B1IAP6"/>
<dbReference type="KEGG" id="spv:SPH_0811"/>
<dbReference type="HOGENOM" id="CLU_019943_0_0_9"/>
<dbReference type="UniPathway" id="UPA00060">
    <property type="reaction ID" value="UER00139"/>
</dbReference>
<dbReference type="Proteomes" id="UP000002163">
    <property type="component" value="Chromosome"/>
</dbReference>
<dbReference type="GO" id="GO:0005524">
    <property type="term" value="F:ATP binding"/>
    <property type="evidence" value="ECO:0007669"/>
    <property type="project" value="UniProtKB-UniRule"/>
</dbReference>
<dbReference type="GO" id="GO:0004417">
    <property type="term" value="F:hydroxyethylthiazole kinase activity"/>
    <property type="evidence" value="ECO:0007669"/>
    <property type="project" value="UniProtKB-UniRule"/>
</dbReference>
<dbReference type="GO" id="GO:0000287">
    <property type="term" value="F:magnesium ion binding"/>
    <property type="evidence" value="ECO:0007669"/>
    <property type="project" value="UniProtKB-UniRule"/>
</dbReference>
<dbReference type="GO" id="GO:0009228">
    <property type="term" value="P:thiamine biosynthetic process"/>
    <property type="evidence" value="ECO:0007669"/>
    <property type="project" value="UniProtKB-KW"/>
</dbReference>
<dbReference type="GO" id="GO:0009229">
    <property type="term" value="P:thiamine diphosphate biosynthetic process"/>
    <property type="evidence" value="ECO:0007669"/>
    <property type="project" value="UniProtKB-UniRule"/>
</dbReference>
<dbReference type="CDD" id="cd01170">
    <property type="entry name" value="THZ_kinase"/>
    <property type="match status" value="1"/>
</dbReference>
<dbReference type="Gene3D" id="3.40.1190.20">
    <property type="match status" value="1"/>
</dbReference>
<dbReference type="HAMAP" id="MF_00228">
    <property type="entry name" value="Thz_kinase"/>
    <property type="match status" value="1"/>
</dbReference>
<dbReference type="InterPro" id="IPR000417">
    <property type="entry name" value="Hyethyz_kinase"/>
</dbReference>
<dbReference type="InterPro" id="IPR029056">
    <property type="entry name" value="Ribokinase-like"/>
</dbReference>
<dbReference type="Pfam" id="PF02110">
    <property type="entry name" value="HK"/>
    <property type="match status" value="1"/>
</dbReference>
<dbReference type="PIRSF" id="PIRSF000513">
    <property type="entry name" value="Thz_kinase"/>
    <property type="match status" value="1"/>
</dbReference>
<dbReference type="PRINTS" id="PR01099">
    <property type="entry name" value="HYETHTZKNASE"/>
</dbReference>
<dbReference type="SUPFAM" id="SSF53613">
    <property type="entry name" value="Ribokinase-like"/>
    <property type="match status" value="1"/>
</dbReference>
<keyword id="KW-0067">ATP-binding</keyword>
<keyword id="KW-0418">Kinase</keyword>
<keyword id="KW-0460">Magnesium</keyword>
<keyword id="KW-0479">Metal-binding</keyword>
<keyword id="KW-0547">Nucleotide-binding</keyword>
<keyword id="KW-0784">Thiamine biosynthesis</keyword>
<keyword id="KW-0808">Transferase</keyword>
<sequence length="267" mass="29186">MQEFTNPFPIGSSSLIHCMTNEISCEMLANGILALGCKPVMADDSREVLDFTKQSQALFINLGHLSAEKEKAIRMAASYANQSSLPMVVDAVGVTTSSIRKSLVKDLLDYRPTVLKGNMSEIRSLVGLKHHGVGVDASAKDQETEDLLQVLKDWCQTYPGMSFLVTGPKDLIVSKNQVAVLENGCTELDWITGTGDLVGALTAVFLSQGKTGFEASCLAVSYLNIAAEKIVVQGMGLEEFRYQVLNQLSLLRRDENWLDTIKGEVYE</sequence>
<accession>B1IAP6</accession>
<gene>
    <name evidence="1" type="primary">thiM2</name>
    <name type="ordered locus">SPH_0811</name>
</gene>
<reference key="1">
    <citation type="journal article" date="2010" name="Genome Biol.">
        <title>Structure and dynamics of the pan-genome of Streptococcus pneumoniae and closely related species.</title>
        <authorList>
            <person name="Donati C."/>
            <person name="Hiller N.L."/>
            <person name="Tettelin H."/>
            <person name="Muzzi A."/>
            <person name="Croucher N.J."/>
            <person name="Angiuoli S.V."/>
            <person name="Oggioni M."/>
            <person name="Dunning Hotopp J.C."/>
            <person name="Hu F.Z."/>
            <person name="Riley D.R."/>
            <person name="Covacci A."/>
            <person name="Mitchell T.J."/>
            <person name="Bentley S.D."/>
            <person name="Kilian M."/>
            <person name="Ehrlich G.D."/>
            <person name="Rappuoli R."/>
            <person name="Moxon E.R."/>
            <person name="Masignani V."/>
        </authorList>
    </citation>
    <scope>NUCLEOTIDE SEQUENCE [LARGE SCALE GENOMIC DNA]</scope>
    <source>
        <strain>Hungary19A-6</strain>
    </source>
</reference>
<proteinExistence type="inferred from homology"/>
<protein>
    <recommendedName>
        <fullName evidence="1">Hydroxyethylthiazole kinase 2</fullName>
        <ecNumber evidence="1">2.7.1.50</ecNumber>
    </recommendedName>
    <alternativeName>
        <fullName evidence="1">4-methyl-5-beta-hydroxyethylthiazole kinase 2</fullName>
        <shortName evidence="1">TH kinase 2</shortName>
        <shortName evidence="1">Thz kinase 2</shortName>
    </alternativeName>
</protein>
<comment type="function">
    <text evidence="1">Catalyzes the phosphorylation of the hydroxyl group of 4-methyl-5-beta-hydroxyethylthiazole (THZ).</text>
</comment>
<comment type="catalytic activity">
    <reaction evidence="1">
        <text>5-(2-hydroxyethyl)-4-methylthiazole + ATP = 4-methyl-5-(2-phosphooxyethyl)-thiazole + ADP + H(+)</text>
        <dbReference type="Rhea" id="RHEA:24212"/>
        <dbReference type="ChEBI" id="CHEBI:15378"/>
        <dbReference type="ChEBI" id="CHEBI:17957"/>
        <dbReference type="ChEBI" id="CHEBI:30616"/>
        <dbReference type="ChEBI" id="CHEBI:58296"/>
        <dbReference type="ChEBI" id="CHEBI:456216"/>
        <dbReference type="EC" id="2.7.1.50"/>
    </reaction>
</comment>
<comment type="cofactor">
    <cofactor evidence="1">
        <name>Mg(2+)</name>
        <dbReference type="ChEBI" id="CHEBI:18420"/>
    </cofactor>
</comment>
<comment type="pathway">
    <text evidence="1">Cofactor biosynthesis; thiamine diphosphate biosynthesis; 4-methyl-5-(2-phosphoethyl)-thiazole from 5-(2-hydroxyethyl)-4-methylthiazole: step 1/1.</text>
</comment>
<comment type="similarity">
    <text evidence="1">Belongs to the Thz kinase family.</text>
</comment>
<evidence type="ECO:0000255" key="1">
    <source>
        <dbReference type="HAMAP-Rule" id="MF_00228"/>
    </source>
</evidence>
<name>THIM2_STRPI</name>
<feature type="chain" id="PRO_0000383902" description="Hydroxyethylthiazole kinase 2">
    <location>
        <begin position="1"/>
        <end position="267"/>
    </location>
</feature>
<feature type="binding site" evidence="1">
    <location>
        <position position="41"/>
    </location>
    <ligand>
        <name>substrate</name>
    </ligand>
</feature>
<feature type="binding site" evidence="1">
    <location>
        <position position="116"/>
    </location>
    <ligand>
        <name>ATP</name>
        <dbReference type="ChEBI" id="CHEBI:30616"/>
    </ligand>
</feature>
<feature type="binding site" evidence="1">
    <location>
        <position position="166"/>
    </location>
    <ligand>
        <name>ATP</name>
        <dbReference type="ChEBI" id="CHEBI:30616"/>
    </ligand>
</feature>
<feature type="binding site" evidence="1">
    <location>
        <position position="193"/>
    </location>
    <ligand>
        <name>substrate</name>
    </ligand>
</feature>